<feature type="chain" id="PRO_0000261032" description="Cyclin-dependent kinase 10">
    <location>
        <begin position="1"/>
        <end position="361"/>
    </location>
</feature>
<feature type="domain" description="Protein kinase" evidence="2">
    <location>
        <begin position="37"/>
        <end position="321"/>
    </location>
</feature>
<feature type="region of interest" description="Disordered" evidence="4">
    <location>
        <begin position="332"/>
        <end position="361"/>
    </location>
</feature>
<feature type="active site" description="Proton acceptor" evidence="2 3">
    <location>
        <position position="161"/>
    </location>
</feature>
<feature type="binding site" evidence="2">
    <location>
        <begin position="43"/>
        <end position="51"/>
    </location>
    <ligand>
        <name>ATP</name>
        <dbReference type="ChEBI" id="CHEBI:30616"/>
    </ligand>
</feature>
<feature type="binding site" evidence="2">
    <location>
        <position position="66"/>
    </location>
    <ligand>
        <name>ATP</name>
        <dbReference type="ChEBI" id="CHEBI:30616"/>
    </ligand>
</feature>
<feature type="modified residue" description="Phosphothreonine" evidence="1">
    <location>
        <position position="194"/>
    </location>
</feature>
<reference key="1">
    <citation type="submission" date="2005-11" db="EMBL/GenBank/DDBJ databases">
        <authorList>
            <consortium name="NIH - Mammalian Gene Collection (MGC) project"/>
        </authorList>
    </citation>
    <scope>NUCLEOTIDE SEQUENCE [LARGE SCALE MRNA]</scope>
    <source>
        <strain>Crossbred X Angus</strain>
        <tissue>Liver</tissue>
    </source>
</reference>
<comment type="function">
    <text evidence="1">Cyclin-dependent kinase that phosphorylates the transcription factor ETS2 (in vitro) and positively controls its proteasomal degradation (in cells). Involved in the regulation of actin cytoskeleton organization through the phosphorylation of actin dynamics regulators such as PKN2. Is a negative regulator of ciliogenesis through phosphorylation of PKN2 and promotion of RhoA signaling.</text>
</comment>
<comment type="catalytic activity">
    <reaction>
        <text>L-seryl-[protein] + ATP = O-phospho-L-seryl-[protein] + ADP + H(+)</text>
        <dbReference type="Rhea" id="RHEA:17989"/>
        <dbReference type="Rhea" id="RHEA-COMP:9863"/>
        <dbReference type="Rhea" id="RHEA-COMP:11604"/>
        <dbReference type="ChEBI" id="CHEBI:15378"/>
        <dbReference type="ChEBI" id="CHEBI:29999"/>
        <dbReference type="ChEBI" id="CHEBI:30616"/>
        <dbReference type="ChEBI" id="CHEBI:83421"/>
        <dbReference type="ChEBI" id="CHEBI:456216"/>
        <dbReference type="EC" id="2.7.11.22"/>
    </reaction>
</comment>
<comment type="catalytic activity">
    <reaction>
        <text>L-threonyl-[protein] + ATP = O-phospho-L-threonyl-[protein] + ADP + H(+)</text>
        <dbReference type="Rhea" id="RHEA:46608"/>
        <dbReference type="Rhea" id="RHEA-COMP:11060"/>
        <dbReference type="Rhea" id="RHEA-COMP:11605"/>
        <dbReference type="ChEBI" id="CHEBI:15378"/>
        <dbReference type="ChEBI" id="CHEBI:30013"/>
        <dbReference type="ChEBI" id="CHEBI:30616"/>
        <dbReference type="ChEBI" id="CHEBI:61977"/>
        <dbReference type="ChEBI" id="CHEBI:456216"/>
        <dbReference type="EC" id="2.7.11.22"/>
    </reaction>
</comment>
<comment type="subunit">
    <text evidence="1">Heterodimer with CCNQ, the interaction is required for kinase activity. Interacts with ETS2. Interacts with PRK2.</text>
</comment>
<comment type="subcellular location">
    <subcellularLocation>
        <location evidence="1">Cytoplasm</location>
        <location evidence="1">Cytoskeleton</location>
        <location evidence="1">Cilium basal body</location>
    </subcellularLocation>
</comment>
<comment type="similarity">
    <text evidence="5">Belongs to the protein kinase superfamily. CMGC Ser/Thr protein kinase family. CDC2/CDKX subfamily.</text>
</comment>
<gene>
    <name type="primary">CDK10</name>
</gene>
<proteinExistence type="evidence at transcript level"/>
<accession>Q2TBL8</accession>
<dbReference type="EC" id="2.7.11.22"/>
<dbReference type="EMBL" id="BC109954">
    <property type="protein sequence ID" value="AAI09955.1"/>
    <property type="molecule type" value="mRNA"/>
</dbReference>
<dbReference type="RefSeq" id="NP_001033666.1">
    <property type="nucleotide sequence ID" value="NM_001038577.2"/>
</dbReference>
<dbReference type="SMR" id="Q2TBL8"/>
<dbReference type="FunCoup" id="Q2TBL8">
    <property type="interactions" value="2313"/>
</dbReference>
<dbReference type="STRING" id="9913.ENSBTAP00000044609"/>
<dbReference type="PaxDb" id="9913-ENSBTAP00000044609"/>
<dbReference type="GeneID" id="615171"/>
<dbReference type="KEGG" id="bta:615171"/>
<dbReference type="CTD" id="8558"/>
<dbReference type="VEuPathDB" id="HostDB:ENSBTAG00000033333"/>
<dbReference type="eggNOG" id="KOG0663">
    <property type="taxonomic scope" value="Eukaryota"/>
</dbReference>
<dbReference type="HOGENOM" id="CLU_000288_181_1_1"/>
<dbReference type="InParanoid" id="Q2TBL8"/>
<dbReference type="OMA" id="WVARATN"/>
<dbReference type="OrthoDB" id="1732493at2759"/>
<dbReference type="TreeFam" id="TF101026"/>
<dbReference type="Proteomes" id="UP000009136">
    <property type="component" value="Chromosome 18"/>
</dbReference>
<dbReference type="Bgee" id="ENSBTAG00000033333">
    <property type="expression patterns" value="Expressed in retina and 106 other cell types or tissues"/>
</dbReference>
<dbReference type="GO" id="GO:0036064">
    <property type="term" value="C:ciliary basal body"/>
    <property type="evidence" value="ECO:0000250"/>
    <property type="project" value="UniProtKB"/>
</dbReference>
<dbReference type="GO" id="GO:0005737">
    <property type="term" value="C:cytoplasm"/>
    <property type="evidence" value="ECO:0007669"/>
    <property type="project" value="UniProtKB-KW"/>
</dbReference>
<dbReference type="GO" id="GO:0005634">
    <property type="term" value="C:nucleus"/>
    <property type="evidence" value="ECO:0000318"/>
    <property type="project" value="GO_Central"/>
</dbReference>
<dbReference type="GO" id="GO:0005524">
    <property type="term" value="F:ATP binding"/>
    <property type="evidence" value="ECO:0007669"/>
    <property type="project" value="UniProtKB-KW"/>
</dbReference>
<dbReference type="GO" id="GO:0004693">
    <property type="term" value="F:cyclin-dependent protein serine/threonine kinase activity"/>
    <property type="evidence" value="ECO:0007669"/>
    <property type="project" value="UniProtKB-EC"/>
</dbReference>
<dbReference type="GO" id="GO:0106310">
    <property type="term" value="F:protein serine kinase activity"/>
    <property type="evidence" value="ECO:0007669"/>
    <property type="project" value="RHEA"/>
</dbReference>
<dbReference type="GO" id="GO:0004674">
    <property type="term" value="F:protein serine/threonine kinase activity"/>
    <property type="evidence" value="ECO:0000250"/>
    <property type="project" value="UniProtKB"/>
</dbReference>
<dbReference type="GO" id="GO:0030030">
    <property type="term" value="P:cell projection organization"/>
    <property type="evidence" value="ECO:0007669"/>
    <property type="project" value="UniProtKB-KW"/>
</dbReference>
<dbReference type="GO" id="GO:1902018">
    <property type="term" value="P:negative regulation of cilium assembly"/>
    <property type="evidence" value="ECO:0000250"/>
    <property type="project" value="UniProtKB"/>
</dbReference>
<dbReference type="GO" id="GO:0018107">
    <property type="term" value="P:peptidyl-threonine phosphorylation"/>
    <property type="evidence" value="ECO:0000250"/>
    <property type="project" value="UniProtKB"/>
</dbReference>
<dbReference type="GO" id="GO:0032956">
    <property type="term" value="P:regulation of actin cytoskeleton organization"/>
    <property type="evidence" value="ECO:0000250"/>
    <property type="project" value="UniProtKB"/>
</dbReference>
<dbReference type="GO" id="GO:0051726">
    <property type="term" value="P:regulation of cell cycle"/>
    <property type="evidence" value="ECO:0000318"/>
    <property type="project" value="GO_Central"/>
</dbReference>
<dbReference type="GO" id="GO:0007346">
    <property type="term" value="P:regulation of mitotic cell cycle"/>
    <property type="evidence" value="ECO:0007669"/>
    <property type="project" value="InterPro"/>
</dbReference>
<dbReference type="CDD" id="cd07845">
    <property type="entry name" value="STKc_CDK10"/>
    <property type="match status" value="1"/>
</dbReference>
<dbReference type="FunFam" id="1.10.510.10:FF:000289">
    <property type="entry name" value="cyclin-dependent kinase 10 isoform X2"/>
    <property type="match status" value="1"/>
</dbReference>
<dbReference type="FunFam" id="3.30.200.20:FF:000256">
    <property type="entry name" value="cyclin-dependent kinase 10 isoform X2"/>
    <property type="match status" value="1"/>
</dbReference>
<dbReference type="Gene3D" id="3.30.200.20">
    <property type="entry name" value="Phosphorylase Kinase, domain 1"/>
    <property type="match status" value="1"/>
</dbReference>
<dbReference type="Gene3D" id="1.10.510.10">
    <property type="entry name" value="Transferase(Phosphotransferase) domain 1"/>
    <property type="match status" value="1"/>
</dbReference>
<dbReference type="InterPro" id="IPR050108">
    <property type="entry name" value="CDK"/>
</dbReference>
<dbReference type="InterPro" id="IPR011009">
    <property type="entry name" value="Kinase-like_dom_sf"/>
</dbReference>
<dbReference type="InterPro" id="IPR000719">
    <property type="entry name" value="Prot_kinase_dom"/>
</dbReference>
<dbReference type="InterPro" id="IPR017441">
    <property type="entry name" value="Protein_kinase_ATP_BS"/>
</dbReference>
<dbReference type="InterPro" id="IPR008271">
    <property type="entry name" value="Ser/Thr_kinase_AS"/>
</dbReference>
<dbReference type="InterPro" id="IPR044093">
    <property type="entry name" value="STKc_CDK10"/>
</dbReference>
<dbReference type="PANTHER" id="PTHR24056">
    <property type="entry name" value="CELL DIVISION PROTEIN KINASE"/>
    <property type="match status" value="1"/>
</dbReference>
<dbReference type="PANTHER" id="PTHR24056:SF508">
    <property type="entry name" value="CYCLIN-DEPENDENT KINASE 10"/>
    <property type="match status" value="1"/>
</dbReference>
<dbReference type="Pfam" id="PF00069">
    <property type="entry name" value="Pkinase"/>
    <property type="match status" value="1"/>
</dbReference>
<dbReference type="SMART" id="SM00220">
    <property type="entry name" value="S_TKc"/>
    <property type="match status" value="1"/>
</dbReference>
<dbReference type="SUPFAM" id="SSF56112">
    <property type="entry name" value="Protein kinase-like (PK-like)"/>
    <property type="match status" value="1"/>
</dbReference>
<dbReference type="PROSITE" id="PS00107">
    <property type="entry name" value="PROTEIN_KINASE_ATP"/>
    <property type="match status" value="1"/>
</dbReference>
<dbReference type="PROSITE" id="PS50011">
    <property type="entry name" value="PROTEIN_KINASE_DOM"/>
    <property type="match status" value="1"/>
</dbReference>
<dbReference type="PROSITE" id="PS00108">
    <property type="entry name" value="PROTEIN_KINASE_ST"/>
    <property type="match status" value="1"/>
</dbReference>
<organism>
    <name type="scientific">Bos taurus</name>
    <name type="common">Bovine</name>
    <dbReference type="NCBI Taxonomy" id="9913"/>
    <lineage>
        <taxon>Eukaryota</taxon>
        <taxon>Metazoa</taxon>
        <taxon>Chordata</taxon>
        <taxon>Craniata</taxon>
        <taxon>Vertebrata</taxon>
        <taxon>Euteleostomi</taxon>
        <taxon>Mammalia</taxon>
        <taxon>Eutheria</taxon>
        <taxon>Laurasiatheria</taxon>
        <taxon>Artiodactyla</taxon>
        <taxon>Ruminantia</taxon>
        <taxon>Pecora</taxon>
        <taxon>Bovidae</taxon>
        <taxon>Bovinae</taxon>
        <taxon>Bos</taxon>
    </lineage>
</organism>
<sequence>MGEPEPEQIRLKCVRKEGFFTVPPEHRLGRCRSVKEFEKLNRIGEGTYGIVYRARDTHTDEIVALKKVRMDKEKDGVPISSLREITLLLRLRHPNIVELKEVVVGNHLESIFLVMGYCEQDLASLLENMPTPFSEAQVKCIVLQVLRGLQYLHRNFIIHRDLKVSNLLMTDKGCVKTADFGLARAYGIPVKPMTPKVVTLWYRAPELLLGTTTQTTSIDMWAVGCILAELLAHKPLLPGTSEIHQVDLIVQLLGTPSENIWPGFSQLPLASQYSLRKQPYNNLKHKFPWLSEAGLRLMNLLFMYDPKKRATAGDCLESSYFKEKPLPCEPELMPTFPHHRNKRATPATSLGTESQSRRGRP</sequence>
<name>CDK10_BOVIN</name>
<evidence type="ECO:0000250" key="1">
    <source>
        <dbReference type="UniProtKB" id="Q15131"/>
    </source>
</evidence>
<evidence type="ECO:0000255" key="2">
    <source>
        <dbReference type="PROSITE-ProRule" id="PRU00159"/>
    </source>
</evidence>
<evidence type="ECO:0000255" key="3">
    <source>
        <dbReference type="PROSITE-ProRule" id="PRU10027"/>
    </source>
</evidence>
<evidence type="ECO:0000256" key="4">
    <source>
        <dbReference type="SAM" id="MobiDB-lite"/>
    </source>
</evidence>
<evidence type="ECO:0000305" key="5"/>
<keyword id="KW-0067">ATP-binding</keyword>
<keyword id="KW-0966">Cell projection</keyword>
<keyword id="KW-0970">Cilium biogenesis/degradation</keyword>
<keyword id="KW-0963">Cytoplasm</keyword>
<keyword id="KW-0206">Cytoskeleton</keyword>
<keyword id="KW-0418">Kinase</keyword>
<keyword id="KW-0547">Nucleotide-binding</keyword>
<keyword id="KW-0597">Phosphoprotein</keyword>
<keyword id="KW-1185">Reference proteome</keyword>
<keyword id="KW-0723">Serine/threonine-protein kinase</keyword>
<keyword id="KW-0808">Transferase</keyword>
<protein>
    <recommendedName>
        <fullName>Cyclin-dependent kinase 10</fullName>
        <ecNumber>2.7.11.22</ecNumber>
    </recommendedName>
    <alternativeName>
        <fullName>Cell division protein kinase 10</fullName>
    </alternativeName>
</protein>